<gene>
    <name type="primary">TPI1</name>
    <name type="ordered locus">AGL201C</name>
</gene>
<organism>
    <name type="scientific">Eremothecium gossypii (strain ATCC 10895 / CBS 109.51 / FGSC 9923 / NRRL Y-1056)</name>
    <name type="common">Yeast</name>
    <name type="synonym">Ashbya gossypii</name>
    <dbReference type="NCBI Taxonomy" id="284811"/>
    <lineage>
        <taxon>Eukaryota</taxon>
        <taxon>Fungi</taxon>
        <taxon>Dikarya</taxon>
        <taxon>Ascomycota</taxon>
        <taxon>Saccharomycotina</taxon>
        <taxon>Saccharomycetes</taxon>
        <taxon>Saccharomycetales</taxon>
        <taxon>Saccharomycetaceae</taxon>
        <taxon>Eremothecium</taxon>
    </lineage>
</organism>
<accession>Q750Y8</accession>
<sequence length="248" mass="26798">MARTFFVGGNFKLNGSKQSIKEIVERLNTADLADNVEVVICPPATYLDHAVSLVSHPQVTVGAQNAYTKASGAYTGENSVDQIKDVGAKWVILGHSERRTYFNEDDEQVAEKTAFALERGVSVILCIGETLDEKKAGVTLDVVKRQLTPVLEKVKDWTNVVIAYEPVWAIGTGLAATAEDAQDIHAAIRDFLAERTSRDVADAVRILYGGSANGANAASFRDKADVDGFLVGGASLKPEFVDIINSRR</sequence>
<proteinExistence type="inferred from homology"/>
<keyword id="KW-0312">Gluconeogenesis</keyword>
<keyword id="KW-0324">Glycolysis</keyword>
<keyword id="KW-0413">Isomerase</keyword>
<keyword id="KW-1185">Reference proteome</keyword>
<reference key="1">
    <citation type="journal article" date="2004" name="Science">
        <title>The Ashbya gossypii genome as a tool for mapping the ancient Saccharomyces cerevisiae genome.</title>
        <authorList>
            <person name="Dietrich F.S."/>
            <person name="Voegeli S."/>
            <person name="Brachat S."/>
            <person name="Lerch A."/>
            <person name="Gates K."/>
            <person name="Steiner S."/>
            <person name="Mohr C."/>
            <person name="Poehlmann R."/>
            <person name="Luedi P."/>
            <person name="Choi S."/>
            <person name="Wing R.A."/>
            <person name="Flavier A."/>
            <person name="Gaffney T.D."/>
            <person name="Philippsen P."/>
        </authorList>
    </citation>
    <scope>NUCLEOTIDE SEQUENCE [LARGE SCALE GENOMIC DNA]</scope>
    <source>
        <strain>ATCC 10895 / CBS 109.51 / FGSC 9923 / NRRL Y-1056</strain>
    </source>
</reference>
<reference key="2">
    <citation type="journal article" date="2013" name="G3 (Bethesda)">
        <title>Genomes of Ashbya fungi isolated from insects reveal four mating-type loci, numerous translocations, lack of transposons, and distinct gene duplications.</title>
        <authorList>
            <person name="Dietrich F.S."/>
            <person name="Voegeli S."/>
            <person name="Kuo S."/>
            <person name="Philippsen P."/>
        </authorList>
    </citation>
    <scope>GENOME REANNOTATION</scope>
    <scope>SEQUENCE REVISION TO 208</scope>
    <source>
        <strain>ATCC 10895 / CBS 109.51 / FGSC 9923 / NRRL Y-1056</strain>
    </source>
</reference>
<feature type="chain" id="PRO_0000090156" description="Triosephosphate isomerase">
    <location>
        <begin position="1"/>
        <end position="248"/>
    </location>
</feature>
<feature type="active site" description="Electrophile" evidence="1">
    <location>
        <position position="95"/>
    </location>
</feature>
<feature type="active site" description="Proton acceptor" evidence="1">
    <location>
        <position position="165"/>
    </location>
</feature>
<feature type="binding site" evidence="1">
    <location>
        <position position="10"/>
    </location>
    <ligand>
        <name>substrate</name>
    </ligand>
</feature>
<feature type="binding site" evidence="1">
    <location>
        <position position="12"/>
    </location>
    <ligand>
        <name>substrate</name>
    </ligand>
</feature>
<comment type="catalytic activity">
    <reaction>
        <text>D-glyceraldehyde 3-phosphate = dihydroxyacetone phosphate</text>
        <dbReference type="Rhea" id="RHEA:18585"/>
        <dbReference type="ChEBI" id="CHEBI:57642"/>
        <dbReference type="ChEBI" id="CHEBI:59776"/>
        <dbReference type="EC" id="5.3.1.1"/>
    </reaction>
</comment>
<comment type="pathway">
    <text>Carbohydrate biosynthesis; gluconeogenesis.</text>
</comment>
<comment type="pathway">
    <text>Carbohydrate degradation; glycolysis; D-glyceraldehyde 3-phosphate from glycerone phosphate: step 1/1.</text>
</comment>
<comment type="subunit">
    <text evidence="1">Homodimer.</text>
</comment>
<comment type="similarity">
    <text evidence="2">Belongs to the triosephosphate isomerase family.</text>
</comment>
<evidence type="ECO:0000250" key="1"/>
<evidence type="ECO:0000305" key="2"/>
<protein>
    <recommendedName>
        <fullName>Triosephosphate isomerase</fullName>
        <shortName>TIM</shortName>
        <ecNumber>5.3.1.1</ecNumber>
    </recommendedName>
    <alternativeName>
        <fullName>Triose-phosphate isomerase</fullName>
    </alternativeName>
</protein>
<name>TPIS_EREGS</name>
<dbReference type="EC" id="5.3.1.1"/>
<dbReference type="EMBL" id="AE016820">
    <property type="protein sequence ID" value="AAS54290.2"/>
    <property type="molecule type" value="Genomic_DNA"/>
</dbReference>
<dbReference type="RefSeq" id="NP_986466.2">
    <property type="nucleotide sequence ID" value="NM_211528.2"/>
</dbReference>
<dbReference type="SMR" id="Q750Y8"/>
<dbReference type="FunCoup" id="Q750Y8">
    <property type="interactions" value="715"/>
</dbReference>
<dbReference type="STRING" id="284811.Q750Y8"/>
<dbReference type="EnsemblFungi" id="AAS54290">
    <property type="protein sequence ID" value="AAS54290"/>
    <property type="gene ID" value="AGOS_AGL201C"/>
</dbReference>
<dbReference type="GeneID" id="4622759"/>
<dbReference type="KEGG" id="ago:AGOS_AGL201C"/>
<dbReference type="eggNOG" id="KOG1643">
    <property type="taxonomic scope" value="Eukaryota"/>
</dbReference>
<dbReference type="HOGENOM" id="CLU_024251_2_0_1"/>
<dbReference type="InParanoid" id="Q750Y8"/>
<dbReference type="OMA" id="NWKMHMT"/>
<dbReference type="OrthoDB" id="6715177at2759"/>
<dbReference type="UniPathway" id="UPA00109">
    <property type="reaction ID" value="UER00189"/>
</dbReference>
<dbReference type="UniPathway" id="UPA00138"/>
<dbReference type="Proteomes" id="UP000000591">
    <property type="component" value="Chromosome VII"/>
</dbReference>
<dbReference type="GO" id="GO:0005829">
    <property type="term" value="C:cytosol"/>
    <property type="evidence" value="ECO:0000318"/>
    <property type="project" value="GO_Central"/>
</dbReference>
<dbReference type="GO" id="GO:0005739">
    <property type="term" value="C:mitochondrion"/>
    <property type="evidence" value="ECO:0007669"/>
    <property type="project" value="EnsemblFungi"/>
</dbReference>
<dbReference type="GO" id="GO:0004807">
    <property type="term" value="F:triose-phosphate isomerase activity"/>
    <property type="evidence" value="ECO:0000318"/>
    <property type="project" value="GO_Central"/>
</dbReference>
<dbReference type="GO" id="GO:0061621">
    <property type="term" value="P:canonical glycolysis"/>
    <property type="evidence" value="ECO:0007669"/>
    <property type="project" value="EnsemblFungi"/>
</dbReference>
<dbReference type="GO" id="GO:0006094">
    <property type="term" value="P:gluconeogenesis"/>
    <property type="evidence" value="ECO:0000318"/>
    <property type="project" value="GO_Central"/>
</dbReference>
<dbReference type="GO" id="GO:0046166">
    <property type="term" value="P:glyceraldehyde-3-phosphate biosynthetic process"/>
    <property type="evidence" value="ECO:0000318"/>
    <property type="project" value="GO_Central"/>
</dbReference>
<dbReference type="GO" id="GO:0019563">
    <property type="term" value="P:glycerol catabolic process"/>
    <property type="evidence" value="ECO:0000318"/>
    <property type="project" value="GO_Central"/>
</dbReference>
<dbReference type="GO" id="GO:0006096">
    <property type="term" value="P:glycolytic process"/>
    <property type="evidence" value="ECO:0000318"/>
    <property type="project" value="GO_Central"/>
</dbReference>
<dbReference type="CDD" id="cd00311">
    <property type="entry name" value="TIM"/>
    <property type="match status" value="1"/>
</dbReference>
<dbReference type="FunFam" id="3.20.20.70:FF:000025">
    <property type="entry name" value="Triosephosphate isomerase"/>
    <property type="match status" value="1"/>
</dbReference>
<dbReference type="Gene3D" id="3.20.20.70">
    <property type="entry name" value="Aldolase class I"/>
    <property type="match status" value="1"/>
</dbReference>
<dbReference type="HAMAP" id="MF_00147_B">
    <property type="entry name" value="TIM_B"/>
    <property type="match status" value="1"/>
</dbReference>
<dbReference type="InterPro" id="IPR013785">
    <property type="entry name" value="Aldolase_TIM"/>
</dbReference>
<dbReference type="InterPro" id="IPR035990">
    <property type="entry name" value="TIM_sf"/>
</dbReference>
<dbReference type="InterPro" id="IPR022896">
    <property type="entry name" value="TrioseP_Isoase_bac/euk"/>
</dbReference>
<dbReference type="InterPro" id="IPR000652">
    <property type="entry name" value="Triosephosphate_isomerase"/>
</dbReference>
<dbReference type="InterPro" id="IPR020861">
    <property type="entry name" value="Triosephosphate_isomerase_AS"/>
</dbReference>
<dbReference type="NCBIfam" id="TIGR00419">
    <property type="entry name" value="tim"/>
    <property type="match status" value="1"/>
</dbReference>
<dbReference type="PANTHER" id="PTHR21139">
    <property type="entry name" value="TRIOSEPHOSPHATE ISOMERASE"/>
    <property type="match status" value="1"/>
</dbReference>
<dbReference type="PANTHER" id="PTHR21139:SF41">
    <property type="entry name" value="TRIOSEPHOSPHATE ISOMERASE"/>
    <property type="match status" value="1"/>
</dbReference>
<dbReference type="Pfam" id="PF00121">
    <property type="entry name" value="TIM"/>
    <property type="match status" value="1"/>
</dbReference>
<dbReference type="SUPFAM" id="SSF51351">
    <property type="entry name" value="Triosephosphate isomerase (TIM)"/>
    <property type="match status" value="1"/>
</dbReference>
<dbReference type="PROSITE" id="PS00171">
    <property type="entry name" value="TIM_1"/>
    <property type="match status" value="1"/>
</dbReference>
<dbReference type="PROSITE" id="PS51440">
    <property type="entry name" value="TIM_2"/>
    <property type="match status" value="1"/>
</dbReference>